<proteinExistence type="inferred from homology"/>
<dbReference type="EC" id="5.4.2.11" evidence="1"/>
<dbReference type="EMBL" id="CP001291">
    <property type="protein sequence ID" value="ACK70774.1"/>
    <property type="molecule type" value="Genomic_DNA"/>
</dbReference>
<dbReference type="RefSeq" id="WP_015954378.1">
    <property type="nucleotide sequence ID" value="NC_011729.1"/>
</dbReference>
<dbReference type="SMR" id="B7KIT8"/>
<dbReference type="STRING" id="65393.PCC7424_2353"/>
<dbReference type="KEGG" id="cyc:PCC7424_2353"/>
<dbReference type="eggNOG" id="COG0588">
    <property type="taxonomic scope" value="Bacteria"/>
</dbReference>
<dbReference type="HOGENOM" id="CLU_033323_1_4_3"/>
<dbReference type="OrthoDB" id="9781415at2"/>
<dbReference type="UniPathway" id="UPA00109">
    <property type="reaction ID" value="UER00186"/>
</dbReference>
<dbReference type="Proteomes" id="UP000002384">
    <property type="component" value="Chromosome"/>
</dbReference>
<dbReference type="GO" id="GO:0004619">
    <property type="term" value="F:phosphoglycerate mutase activity"/>
    <property type="evidence" value="ECO:0007669"/>
    <property type="project" value="UniProtKB-EC"/>
</dbReference>
<dbReference type="GO" id="GO:0006094">
    <property type="term" value="P:gluconeogenesis"/>
    <property type="evidence" value="ECO:0007669"/>
    <property type="project" value="UniProtKB-UniRule"/>
</dbReference>
<dbReference type="GO" id="GO:0006096">
    <property type="term" value="P:glycolytic process"/>
    <property type="evidence" value="ECO:0007669"/>
    <property type="project" value="UniProtKB-UniRule"/>
</dbReference>
<dbReference type="CDD" id="cd07067">
    <property type="entry name" value="HP_PGM_like"/>
    <property type="match status" value="1"/>
</dbReference>
<dbReference type="Gene3D" id="3.40.50.1240">
    <property type="entry name" value="Phosphoglycerate mutase-like"/>
    <property type="match status" value="1"/>
</dbReference>
<dbReference type="HAMAP" id="MF_01039">
    <property type="entry name" value="PGAM_GpmA"/>
    <property type="match status" value="1"/>
</dbReference>
<dbReference type="InterPro" id="IPR013078">
    <property type="entry name" value="His_Pase_superF_clade-1"/>
</dbReference>
<dbReference type="InterPro" id="IPR029033">
    <property type="entry name" value="His_PPase_superfam"/>
</dbReference>
<dbReference type="InterPro" id="IPR001345">
    <property type="entry name" value="PG/BPGM_mutase_AS"/>
</dbReference>
<dbReference type="InterPro" id="IPR005952">
    <property type="entry name" value="Phosphogly_mut1"/>
</dbReference>
<dbReference type="NCBIfam" id="TIGR01258">
    <property type="entry name" value="pgm_1"/>
    <property type="match status" value="2"/>
</dbReference>
<dbReference type="NCBIfam" id="NF002217">
    <property type="entry name" value="PRK01112.1"/>
    <property type="match status" value="1"/>
</dbReference>
<dbReference type="PANTHER" id="PTHR11931">
    <property type="entry name" value="PHOSPHOGLYCERATE MUTASE"/>
    <property type="match status" value="1"/>
</dbReference>
<dbReference type="Pfam" id="PF00300">
    <property type="entry name" value="His_Phos_1"/>
    <property type="match status" value="2"/>
</dbReference>
<dbReference type="PIRSF" id="PIRSF000709">
    <property type="entry name" value="6PFK_2-Ptase"/>
    <property type="match status" value="1"/>
</dbReference>
<dbReference type="SMART" id="SM00855">
    <property type="entry name" value="PGAM"/>
    <property type="match status" value="1"/>
</dbReference>
<dbReference type="SUPFAM" id="SSF53254">
    <property type="entry name" value="Phosphoglycerate mutase-like"/>
    <property type="match status" value="1"/>
</dbReference>
<dbReference type="PROSITE" id="PS00175">
    <property type="entry name" value="PG_MUTASE"/>
    <property type="match status" value="1"/>
</dbReference>
<evidence type="ECO:0000255" key="1">
    <source>
        <dbReference type="HAMAP-Rule" id="MF_01039"/>
    </source>
</evidence>
<sequence>MSKLILIRHGQSLWNAANKFTGWVDIPLSRRGRAEAMIAASKLQEQGYRIDVCFTSLLIRAMETAIIALTEYEQLCGGKTPIFKHDADDLDWHGWDKYDGDPKEELPIFPSQALDERYYGDLQGLNKAQTAQKYGSEQVHEWRRSYFTRPPGGESLEDTQKRVIPYFENRILTHIAHGDTVMVAAHGNSLRAMIMRLENLQPEDVPNLELATGIPLIYEVDQQAKVSNKIVLH</sequence>
<reference key="1">
    <citation type="journal article" date="2011" name="MBio">
        <title>Novel metabolic attributes of the genus Cyanothece, comprising a group of unicellular nitrogen-fixing Cyanobacteria.</title>
        <authorList>
            <person name="Bandyopadhyay A."/>
            <person name="Elvitigala T."/>
            <person name="Welsh E."/>
            <person name="Stockel J."/>
            <person name="Liberton M."/>
            <person name="Min H."/>
            <person name="Sherman L.A."/>
            <person name="Pakrasi H.B."/>
        </authorList>
    </citation>
    <scope>NUCLEOTIDE SEQUENCE [LARGE SCALE GENOMIC DNA]</scope>
    <source>
        <strain>PCC 7424</strain>
    </source>
</reference>
<protein>
    <recommendedName>
        <fullName evidence="1">2,3-bisphosphoglycerate-dependent phosphoglycerate mutase</fullName>
        <shortName evidence="1">BPG-dependent PGAM</shortName>
        <shortName evidence="1">PGAM</shortName>
        <shortName evidence="1">Phosphoglyceromutase</shortName>
        <shortName evidence="1">dPGM</shortName>
        <ecNumber evidence="1">5.4.2.11</ecNumber>
    </recommendedName>
</protein>
<feature type="chain" id="PRO_1000135940" description="2,3-bisphosphoglycerate-dependent phosphoglycerate mutase">
    <location>
        <begin position="1"/>
        <end position="233"/>
    </location>
</feature>
<feature type="active site" description="Tele-phosphohistidine intermediate" evidence="1">
    <location>
        <position position="9"/>
    </location>
</feature>
<feature type="active site" description="Proton donor/acceptor" evidence="1">
    <location>
        <position position="116"/>
    </location>
</feature>
<feature type="binding site" evidence="1">
    <location>
        <begin position="8"/>
        <end position="15"/>
    </location>
    <ligand>
        <name>substrate</name>
    </ligand>
</feature>
<feature type="binding site" evidence="1">
    <location>
        <begin position="21"/>
        <end position="22"/>
    </location>
    <ligand>
        <name>substrate</name>
    </ligand>
</feature>
<feature type="binding site" evidence="1">
    <location>
        <position position="60"/>
    </location>
    <ligand>
        <name>substrate</name>
    </ligand>
</feature>
<feature type="binding site" evidence="1">
    <location>
        <begin position="116"/>
        <end position="119"/>
    </location>
    <ligand>
        <name>substrate</name>
    </ligand>
</feature>
<feature type="binding site" evidence="1">
    <location>
        <position position="127"/>
    </location>
    <ligand>
        <name>substrate</name>
    </ligand>
</feature>
<feature type="binding site" evidence="1">
    <location>
        <begin position="143"/>
        <end position="144"/>
    </location>
    <ligand>
        <name>substrate</name>
    </ligand>
</feature>
<feature type="binding site" evidence="1">
    <location>
        <begin position="187"/>
        <end position="188"/>
    </location>
    <ligand>
        <name>substrate</name>
    </ligand>
</feature>
<feature type="site" description="Transition state stabilizer" evidence="1">
    <location>
        <position position="186"/>
    </location>
</feature>
<comment type="function">
    <text evidence="1">Catalyzes the interconversion of 2-phosphoglycerate and 3-phosphoglycerate.</text>
</comment>
<comment type="catalytic activity">
    <reaction evidence="1">
        <text>(2R)-2-phosphoglycerate = (2R)-3-phosphoglycerate</text>
        <dbReference type="Rhea" id="RHEA:15901"/>
        <dbReference type="ChEBI" id="CHEBI:58272"/>
        <dbReference type="ChEBI" id="CHEBI:58289"/>
        <dbReference type="EC" id="5.4.2.11"/>
    </reaction>
</comment>
<comment type="pathway">
    <text evidence="1">Carbohydrate degradation; glycolysis; pyruvate from D-glyceraldehyde 3-phosphate: step 3/5.</text>
</comment>
<comment type="similarity">
    <text evidence="1">Belongs to the phosphoglycerate mutase family. BPG-dependent PGAM subfamily.</text>
</comment>
<gene>
    <name evidence="1" type="primary">gpmA</name>
    <name type="ordered locus">PCC7424_2353</name>
</gene>
<name>GPMA_GLOC7</name>
<accession>B7KIT8</accession>
<organism>
    <name type="scientific">Gloeothece citriformis (strain PCC 7424)</name>
    <name type="common">Cyanothece sp. (strain PCC 7424)</name>
    <dbReference type="NCBI Taxonomy" id="65393"/>
    <lineage>
        <taxon>Bacteria</taxon>
        <taxon>Bacillati</taxon>
        <taxon>Cyanobacteriota</taxon>
        <taxon>Cyanophyceae</taxon>
        <taxon>Oscillatoriophycideae</taxon>
        <taxon>Chroococcales</taxon>
        <taxon>Aphanothecaceae</taxon>
        <taxon>Gloeothece</taxon>
        <taxon>Gloeothece citriformis</taxon>
    </lineage>
</organism>
<keyword id="KW-0312">Gluconeogenesis</keyword>
<keyword id="KW-0324">Glycolysis</keyword>
<keyword id="KW-0413">Isomerase</keyword>
<keyword id="KW-1185">Reference proteome</keyword>